<accession>P11530</accession>
<accession>F1M705</accession>
<comment type="function">
    <text evidence="2">Anchors the extracellular matrix to the cytoskeleton via F-actin. Ligand for dystroglycan. Component of the dystrophin-associated glycoprotein complex which accumulates at the neuromuscular junction (NMJ) and at a variety of synapses in the peripheral and central nervous systems and has a structural function in stabilizing the sarcolemma. Also implicated in signaling events and synaptic transmission.</text>
</comment>
<comment type="subunit">
    <text evidence="2 3 9">Interacts with SYNM (By similarity). Interacts with the syntrophins SNTG1 and SNTG2. Interacts with KRT19. Component of the dystrophin-associated glycoprotein complex which is composed of three subcomplexes: a cytoplasmic complex comprised of DMD (or UTRN), DTNA and a number of syntrophins, such as SNTB1, SNTB2, SNTG1 and SNTG2, the transmembrane dystroglycan complex, and the sarcoglycan-sarcospan complex. Interacts with DAG1 (betaDAG1) with DMD; the interaction is inhibited by phosphorylation on the PPXY motif of DAG1 (By similarity). Interacts with SYNM; SNTA1 and SNTB1. Interacts with CMYA5. Directly interacts with ANK2 and ANK3; these interactions do not interfere with betaDAG1-binding and are necessary for proper localization in muscle cells. Identified in a dystroglycan complex that contains at least PRX, DRP2, UTRN, DMD and DAG1 (By similarity). Interacts with DTNB (PubMed:10545507). Interacts with PGM5; the interaction is direct (By similarity). Interacts with NOS1; localizes NOS1 to sarcolemma in muscle cells (By similarity).</text>
</comment>
<comment type="interaction">
    <interactant intactId="EBI-706166">
        <id>P11530</id>
    </interactant>
    <interactant intactId="EBI-876985">
        <id>Q63279</id>
        <label>Krt19</label>
    </interactant>
    <organismsDiffer>false</organismsDiffer>
    <experiments>3</experiments>
</comment>
<comment type="subcellular location">
    <subcellularLocation>
        <location evidence="2">Cell membrane</location>
        <location evidence="2">Sarcolemma</location>
        <topology evidence="2">Peripheral membrane protein</topology>
        <orientation evidence="2">Cytoplasmic side</orientation>
    </subcellularLocation>
    <subcellularLocation>
        <location evidence="2">Cytoplasm</location>
        <location evidence="2">Cytoskeleton</location>
    </subcellularLocation>
    <subcellularLocation>
        <location evidence="2">Postsynaptic cell membrane</location>
    </subcellularLocation>
    <text evidence="2">In muscle cells, sarcolemma localization requires the presence of ANK2, while localization to costameres requires the presence of ANK3. Localizes to neuromuscular junctions (NMJs). In adult muscle, NMJ localization depends upon ANK2 presence, but not in newborn animals.</text>
</comment>
<comment type="tissue specificity">
    <text evidence="10">Strongly expressed in skeletal muscle and weak expression observed in newborn brain which increases in adult brain.</text>
</comment>
<feature type="chain" id="PRO_0000076077" description="Dystrophin">
    <location>
        <begin position="1"/>
        <end position="3677"/>
    </location>
</feature>
<feature type="domain" description="Calponin-homology (CH) 1" evidence="5">
    <location>
        <begin position="15"/>
        <end position="119"/>
    </location>
</feature>
<feature type="domain" description="Calponin-homology (CH) 2" evidence="5">
    <location>
        <begin position="134"/>
        <end position="240"/>
    </location>
</feature>
<feature type="repeat" description="Spectrin 1" evidence="4">
    <location>
        <begin position="342"/>
        <end position="447"/>
    </location>
</feature>
<feature type="repeat" description="Spectrin 2" evidence="4">
    <location>
        <begin position="451"/>
        <end position="557"/>
    </location>
</feature>
<feature type="repeat" description="Spectrin 3" evidence="4">
    <location>
        <begin position="560"/>
        <end position="668"/>
    </location>
</feature>
<feature type="repeat" description="Spectrin 4" evidence="4">
    <location>
        <begin position="728"/>
        <end position="828"/>
    </location>
</feature>
<feature type="repeat" description="Spectrin 5" evidence="4">
    <location>
        <begin position="831"/>
        <end position="935"/>
    </location>
</feature>
<feature type="repeat" description="Spectrin 6" evidence="4">
    <location>
        <begin position="944"/>
        <end position="1046"/>
    </location>
</feature>
<feature type="repeat" description="Spectrin 7" evidence="4">
    <location>
        <begin position="1049"/>
        <end position="1154"/>
    </location>
</feature>
<feature type="repeat" description="Spectrin 8" evidence="4">
    <location>
        <begin position="1163"/>
        <end position="1264"/>
    </location>
</feature>
<feature type="repeat" description="Spectrin 9" evidence="4">
    <location>
        <begin position="1268"/>
        <end position="1464"/>
    </location>
</feature>
<feature type="repeat" description="Spectrin 10" evidence="4">
    <location>
        <begin position="1469"/>
        <end position="1569"/>
    </location>
</feature>
<feature type="repeat" description="Spectrin 11" evidence="4">
    <location>
        <begin position="1573"/>
        <end position="1676"/>
    </location>
</feature>
<feature type="repeat" description="Spectrin 12" evidence="4">
    <location>
        <begin position="1680"/>
        <end position="1777"/>
    </location>
</feature>
<feature type="repeat" description="Spectrin 13" evidence="4">
    <location>
        <begin position="1779"/>
        <end position="1875"/>
    </location>
</feature>
<feature type="repeat" description="Spectrin 14" evidence="4">
    <location>
        <begin position="1878"/>
        <end position="1980"/>
    </location>
</feature>
<feature type="repeat" description="Spectrin 15" evidence="4">
    <location>
        <begin position="2001"/>
        <end position="2098"/>
    </location>
</feature>
<feature type="repeat" description="Spectrin 16" evidence="4">
    <location>
        <begin position="2106"/>
        <end position="2209"/>
    </location>
</feature>
<feature type="repeat" description="Spectrin 17" evidence="4">
    <location>
        <begin position="2215"/>
        <end position="2316"/>
    </location>
</feature>
<feature type="repeat" description="Spectrin 18" evidence="4">
    <location>
        <begin position="2317"/>
        <end position="2415"/>
    </location>
</feature>
<feature type="repeat" description="Spectrin 19" evidence="4">
    <location>
        <begin position="2465"/>
        <end position="2569"/>
    </location>
</feature>
<feature type="repeat" description="Spectrin 20" evidence="4">
    <location>
        <begin position="2576"/>
        <end position="2678"/>
    </location>
</feature>
<feature type="repeat" description="Spectrin 21" evidence="4">
    <location>
        <begin position="2682"/>
        <end position="2786"/>
    </location>
</feature>
<feature type="repeat" description="Spectrin 22" evidence="4">
    <location>
        <begin position="2800"/>
        <end position="2922"/>
    </location>
</feature>
<feature type="repeat" description="Spectrin 23" evidence="4">
    <location>
        <begin position="2927"/>
        <end position="3032"/>
    </location>
</feature>
<feature type="domain" description="WW" evidence="6">
    <location>
        <begin position="3047"/>
        <end position="3080"/>
    </location>
</feature>
<feature type="zinc finger region" description="ZZ-type; degenerate" evidence="7">
    <location>
        <begin position="3300"/>
        <end position="3356"/>
    </location>
</feature>
<feature type="region of interest" description="Actin-binding">
    <location>
        <begin position="1"/>
        <end position="240"/>
    </location>
</feature>
<feature type="region of interest" description="ANK2- and ANK-3 binding" evidence="1">
    <location>
        <begin position="63"/>
        <end position="72"/>
    </location>
</feature>
<feature type="region of interest" description="Interaction with SYNM" evidence="1">
    <location>
        <begin position="1416"/>
        <end position="1914"/>
    </location>
</feature>
<feature type="region of interest" description="Interaction with SYNM" evidence="1">
    <location>
        <begin position="3050"/>
        <end position="3400"/>
    </location>
</feature>
<feature type="region of interest" description="Binds to SNTB1" evidence="3">
    <location>
        <begin position="3458"/>
        <end position="3510"/>
    </location>
</feature>
<feature type="region of interest" description="Disordered" evidence="8">
    <location>
        <begin position="3520"/>
        <end position="3546"/>
    </location>
</feature>
<feature type="region of interest" description="Disordered" evidence="8">
    <location>
        <begin position="3595"/>
        <end position="3677"/>
    </location>
</feature>
<feature type="compositionally biased region" description="Polar residues" evidence="8">
    <location>
        <begin position="3599"/>
        <end position="3618"/>
    </location>
</feature>
<feature type="compositionally biased region" description="Polar residues" evidence="8">
    <location>
        <begin position="3654"/>
        <end position="3664"/>
    </location>
</feature>
<feature type="binding site" evidence="7">
    <location>
        <position position="3305"/>
    </location>
    <ligand>
        <name>Zn(2+)</name>
        <dbReference type="ChEBI" id="CHEBI:29105"/>
    </ligand>
</feature>
<feature type="binding site" evidence="7">
    <location>
        <position position="3308"/>
    </location>
    <ligand>
        <name>Zn(2+)</name>
        <dbReference type="ChEBI" id="CHEBI:29105"/>
    </ligand>
</feature>
<feature type="binding site" evidence="7">
    <location>
        <position position="3329"/>
    </location>
    <ligand>
        <name>Zn(2+)</name>
        <dbReference type="ChEBI" id="CHEBI:29105"/>
    </ligand>
</feature>
<feature type="binding site" evidence="7">
    <location>
        <position position="3332"/>
    </location>
    <ligand>
        <name>Zn(2+)</name>
        <dbReference type="ChEBI" id="CHEBI:29105"/>
    </ligand>
</feature>
<feature type="modified residue" description="Phosphoserine" evidence="3">
    <location>
        <position position="3475"/>
    </location>
</feature>
<feature type="modified residue" description="Phosphoserine" evidence="3">
    <location>
        <position position="3482"/>
    </location>
</feature>
<feature type="modified residue" description="Phosphoserine" evidence="3">
    <location>
        <position position="3492"/>
    </location>
</feature>
<feature type="modified residue" description="Phosphoserine" evidence="3">
    <location>
        <position position="3604"/>
    </location>
</feature>
<feature type="modified residue" description="Phosphoserine" evidence="3">
    <location>
        <position position="3605"/>
    </location>
</feature>
<feature type="modified residue" description="Phosphoserine" evidence="3">
    <location>
        <position position="3609"/>
    </location>
</feature>
<feature type="modified residue" description="Phosphoserine" evidence="11">
    <location>
        <position position="3615"/>
    </location>
</feature>
<feature type="modified residue" description="Phosphoserine" evidence="11">
    <location>
        <position position="3616"/>
    </location>
</feature>
<feature type="modified residue" description="Phosphoserine" evidence="3">
    <location>
        <position position="3658"/>
    </location>
</feature>
<gene>
    <name type="primary">Dmd</name>
</gene>
<organism>
    <name type="scientific">Rattus norvegicus</name>
    <name type="common">Rat</name>
    <dbReference type="NCBI Taxonomy" id="10116"/>
    <lineage>
        <taxon>Eukaryota</taxon>
        <taxon>Metazoa</taxon>
        <taxon>Chordata</taxon>
        <taxon>Craniata</taxon>
        <taxon>Vertebrata</taxon>
        <taxon>Euteleostomi</taxon>
        <taxon>Mammalia</taxon>
        <taxon>Eutheria</taxon>
        <taxon>Euarchontoglires</taxon>
        <taxon>Glires</taxon>
        <taxon>Rodentia</taxon>
        <taxon>Myomorpha</taxon>
        <taxon>Muroidea</taxon>
        <taxon>Muridae</taxon>
        <taxon>Murinae</taxon>
        <taxon>Rattus</taxon>
    </lineage>
</organism>
<reference key="1">
    <citation type="journal article" date="2004" name="Nature">
        <title>Genome sequence of the Brown Norway rat yields insights into mammalian evolution.</title>
        <authorList>
            <person name="Gibbs R.A."/>
            <person name="Weinstock G.M."/>
            <person name="Metzker M.L."/>
            <person name="Muzny D.M."/>
            <person name="Sodergren E.J."/>
            <person name="Scherer S."/>
            <person name="Scott G."/>
            <person name="Steffen D."/>
            <person name="Worley K.C."/>
            <person name="Burch P.E."/>
            <person name="Okwuonu G."/>
            <person name="Hines S."/>
            <person name="Lewis L."/>
            <person name="Deramo C."/>
            <person name="Delgado O."/>
            <person name="Dugan-Rocha S."/>
            <person name="Miner G."/>
            <person name="Morgan M."/>
            <person name="Hawes A."/>
            <person name="Gill R."/>
            <person name="Holt R.A."/>
            <person name="Adams M.D."/>
            <person name="Amanatides P.G."/>
            <person name="Baden-Tillson H."/>
            <person name="Barnstead M."/>
            <person name="Chin S."/>
            <person name="Evans C.A."/>
            <person name="Ferriera S."/>
            <person name="Fosler C."/>
            <person name="Glodek A."/>
            <person name="Gu Z."/>
            <person name="Jennings D."/>
            <person name="Kraft C.L."/>
            <person name="Nguyen T."/>
            <person name="Pfannkoch C.M."/>
            <person name="Sitter C."/>
            <person name="Sutton G.G."/>
            <person name="Venter J.C."/>
            <person name="Woodage T."/>
            <person name="Smith D."/>
            <person name="Lee H.-M."/>
            <person name="Gustafson E."/>
            <person name="Cahill P."/>
            <person name="Kana A."/>
            <person name="Doucette-Stamm L."/>
            <person name="Weinstock K."/>
            <person name="Fechtel K."/>
            <person name="Weiss R.B."/>
            <person name="Dunn D.M."/>
            <person name="Green E.D."/>
            <person name="Blakesley R.W."/>
            <person name="Bouffard G.G."/>
            <person name="De Jong P.J."/>
            <person name="Osoegawa K."/>
            <person name="Zhu B."/>
            <person name="Marra M."/>
            <person name="Schein J."/>
            <person name="Bosdet I."/>
            <person name="Fjell C."/>
            <person name="Jones S."/>
            <person name="Krzywinski M."/>
            <person name="Mathewson C."/>
            <person name="Siddiqui A."/>
            <person name="Wye N."/>
            <person name="McPherson J."/>
            <person name="Zhao S."/>
            <person name="Fraser C.M."/>
            <person name="Shetty J."/>
            <person name="Shatsman S."/>
            <person name="Geer K."/>
            <person name="Chen Y."/>
            <person name="Abramzon S."/>
            <person name="Nierman W.C."/>
            <person name="Havlak P.H."/>
            <person name="Chen R."/>
            <person name="Durbin K.J."/>
            <person name="Egan A."/>
            <person name="Ren Y."/>
            <person name="Song X.-Z."/>
            <person name="Li B."/>
            <person name="Liu Y."/>
            <person name="Qin X."/>
            <person name="Cawley S."/>
            <person name="Cooney A.J."/>
            <person name="D'Souza L.M."/>
            <person name="Martin K."/>
            <person name="Wu J.Q."/>
            <person name="Gonzalez-Garay M.L."/>
            <person name="Jackson A.R."/>
            <person name="Kalafus K.J."/>
            <person name="McLeod M.P."/>
            <person name="Milosavljevic A."/>
            <person name="Virk D."/>
            <person name="Volkov A."/>
            <person name="Wheeler D.A."/>
            <person name="Zhang Z."/>
            <person name="Bailey J.A."/>
            <person name="Eichler E.E."/>
            <person name="Tuzun E."/>
            <person name="Birney E."/>
            <person name="Mongin E."/>
            <person name="Ureta-Vidal A."/>
            <person name="Woodwark C."/>
            <person name="Zdobnov E."/>
            <person name="Bork P."/>
            <person name="Suyama M."/>
            <person name="Torrents D."/>
            <person name="Alexandersson M."/>
            <person name="Trask B.J."/>
            <person name="Young J.M."/>
            <person name="Huang H."/>
            <person name="Wang H."/>
            <person name="Xing H."/>
            <person name="Daniels S."/>
            <person name="Gietzen D."/>
            <person name="Schmidt J."/>
            <person name="Stevens K."/>
            <person name="Vitt U."/>
            <person name="Wingrove J."/>
            <person name="Camara F."/>
            <person name="Mar Alba M."/>
            <person name="Abril J.F."/>
            <person name="Guigo R."/>
            <person name="Smit A."/>
            <person name="Dubchak I."/>
            <person name="Rubin E.M."/>
            <person name="Couronne O."/>
            <person name="Poliakov A."/>
            <person name="Huebner N."/>
            <person name="Ganten D."/>
            <person name="Goesele C."/>
            <person name="Hummel O."/>
            <person name="Kreitler T."/>
            <person name="Lee Y.-A."/>
            <person name="Monti J."/>
            <person name="Schulz H."/>
            <person name="Zimdahl H."/>
            <person name="Himmelbauer H."/>
            <person name="Lehrach H."/>
            <person name="Jacob H.J."/>
            <person name="Bromberg S."/>
            <person name="Gullings-Handley J."/>
            <person name="Jensen-Seaman M.I."/>
            <person name="Kwitek A.E."/>
            <person name="Lazar J."/>
            <person name="Pasko D."/>
            <person name="Tonellato P.J."/>
            <person name="Twigger S."/>
            <person name="Ponting C.P."/>
            <person name="Duarte J.M."/>
            <person name="Rice S."/>
            <person name="Goodstadt L."/>
            <person name="Beatson S.A."/>
            <person name="Emes R.D."/>
            <person name="Winter E.E."/>
            <person name="Webber C."/>
            <person name="Brandt P."/>
            <person name="Nyakatura G."/>
            <person name="Adetobi M."/>
            <person name="Chiaromonte F."/>
            <person name="Elnitski L."/>
            <person name="Eswara P."/>
            <person name="Hardison R.C."/>
            <person name="Hou M."/>
            <person name="Kolbe D."/>
            <person name="Makova K."/>
            <person name="Miller W."/>
            <person name="Nekrutenko A."/>
            <person name="Riemer C."/>
            <person name="Schwartz S."/>
            <person name="Taylor J."/>
            <person name="Yang S."/>
            <person name="Zhang Y."/>
            <person name="Lindpaintner K."/>
            <person name="Andrews T.D."/>
            <person name="Caccamo M."/>
            <person name="Clamp M."/>
            <person name="Clarke L."/>
            <person name="Curwen V."/>
            <person name="Durbin R.M."/>
            <person name="Eyras E."/>
            <person name="Searle S.M."/>
            <person name="Cooper G.M."/>
            <person name="Batzoglou S."/>
            <person name="Brudno M."/>
            <person name="Sidow A."/>
            <person name="Stone E.A."/>
            <person name="Payseur B.A."/>
            <person name="Bourque G."/>
            <person name="Lopez-Otin C."/>
            <person name="Puente X.S."/>
            <person name="Chakrabarti K."/>
            <person name="Chatterji S."/>
            <person name="Dewey C."/>
            <person name="Pachter L."/>
            <person name="Bray N."/>
            <person name="Yap V.B."/>
            <person name="Caspi A."/>
            <person name="Tesler G."/>
            <person name="Pevzner P.A."/>
            <person name="Haussler D."/>
            <person name="Roskin K.M."/>
            <person name="Baertsch R."/>
            <person name="Clawson H."/>
            <person name="Furey T.S."/>
            <person name="Hinrichs A.S."/>
            <person name="Karolchik D."/>
            <person name="Kent W.J."/>
            <person name="Rosenbloom K.R."/>
            <person name="Trumbower H."/>
            <person name="Weirauch M."/>
            <person name="Cooper D.N."/>
            <person name="Stenson P.D."/>
            <person name="Ma B."/>
            <person name="Brent M."/>
            <person name="Arumugam M."/>
            <person name="Shteynberg D."/>
            <person name="Copley R.R."/>
            <person name="Taylor M.S."/>
            <person name="Riethman H."/>
            <person name="Mudunuri U."/>
            <person name="Peterson J."/>
            <person name="Guyer M."/>
            <person name="Felsenfeld A."/>
            <person name="Old S."/>
            <person name="Mockrin S."/>
            <person name="Collins F.S."/>
        </authorList>
    </citation>
    <scope>NUCLEOTIDE SEQUENCE [LARGE SCALE GENOMIC DNA]</scope>
    <source>
        <strain>Brown Norway</strain>
    </source>
</reference>
<reference key="2">
    <citation type="journal article" date="1988" name="Nature">
        <title>Expression of the putative Duchenne muscular dystrophy gene in differentiated myogenic cell cultures and in the brain.</title>
        <authorList>
            <person name="Nudel U."/>
            <person name="Robzyk K."/>
            <person name="Yaffe D."/>
        </authorList>
    </citation>
    <scope>NUCLEOTIDE SEQUENCE [GENOMIC DNA] OF 766-794</scope>
    <scope>TISSUE SPECIFICITY</scope>
</reference>
<reference key="3">
    <citation type="journal article" date="1999" name="J. Cell Biol.">
        <title>Different dystrophin-like complexes are expressed in neurons and glia.</title>
        <authorList>
            <person name="Blake D.J."/>
            <person name="Hawkes R."/>
            <person name="Benson M.A."/>
            <person name="Beesley P.W."/>
        </authorList>
    </citation>
    <scope>INTERACTION WITH DTNB</scope>
</reference>
<reference key="4">
    <citation type="journal article" date="2012" name="Nat. Commun.">
        <title>Quantitative maps of protein phosphorylation sites across 14 different rat organs and tissues.</title>
        <authorList>
            <person name="Lundby A."/>
            <person name="Secher A."/>
            <person name="Lage K."/>
            <person name="Nordsborg N.B."/>
            <person name="Dmytriyev A."/>
            <person name="Lundby C."/>
            <person name="Olsen J.V."/>
        </authorList>
    </citation>
    <scope>PHOSPHORYLATION [LARGE SCALE ANALYSIS] AT SER-3615 AND SER-3616</scope>
    <scope>IDENTIFICATION BY MASS SPECTROMETRY [LARGE SCALE ANALYSIS]</scope>
</reference>
<evidence type="ECO:0000250" key="1"/>
<evidence type="ECO:0000250" key="2">
    <source>
        <dbReference type="UniProtKB" id="P11531"/>
    </source>
</evidence>
<evidence type="ECO:0000250" key="3">
    <source>
        <dbReference type="UniProtKB" id="P11532"/>
    </source>
</evidence>
<evidence type="ECO:0000255" key="4"/>
<evidence type="ECO:0000255" key="5">
    <source>
        <dbReference type="PROSITE-ProRule" id="PRU00044"/>
    </source>
</evidence>
<evidence type="ECO:0000255" key="6">
    <source>
        <dbReference type="PROSITE-ProRule" id="PRU00224"/>
    </source>
</evidence>
<evidence type="ECO:0000255" key="7">
    <source>
        <dbReference type="PROSITE-ProRule" id="PRU00228"/>
    </source>
</evidence>
<evidence type="ECO:0000256" key="8">
    <source>
        <dbReference type="SAM" id="MobiDB-lite"/>
    </source>
</evidence>
<evidence type="ECO:0000269" key="9">
    <source>
    </source>
</evidence>
<evidence type="ECO:0000269" key="10">
    <source>
    </source>
</evidence>
<evidence type="ECO:0007744" key="11">
    <source>
    </source>
</evidence>
<sequence length="3677" mass="425828">MLWWEEVEDCYEREDVQKKTFTKWINAQFSKFGKQHIDNLFSDLQDGKRLLDLLEGLTGQKLPKEKGSTRVHALNNVNKALQVLQKNNVDLVNIGSTDIVDGNHKLTLGLIWNIILHWQVKNVMKTIMAGLQQTNSEKILLSWVRESTRNYPQVNVLNFTSSWSDGLALNALIHSHRPDLFDWNSVVSQQSATQRLEHAFNIAKCQLGIEKLLDPEDVATTYPDKKSILMYITSLFQVLPQQVSIEAIREVEMLPRPSKVTREEHFQLHHQMHYSQQITVSLAQGYEQTSSSPKPRFKSYAFTQAAYVATSDSSQSPYPSQHLEAPGSKSFGSSLIETEVNLDSYQTALEEVLSWLLSAEDTLRAQGEISKDVEEVKEQFHAHEGFMMDLTSHQGLVGNVLQLGSRLVGKGKLTEDEETEVQEQMNLLNSRWECLRVASMEKQSNLHKVLMDLQNQKLKELDDWLTKTEERTKKMEEEPLGPDLEDLKCQVQQHKVLQEDLEQEQVRVNSLTHMVVVVDESSGDHATAALEEQLKVLGDRWANICKWTEDRWILLQDILLKWQRFTEEQCLFSKWLSEKEDAMKNIQTSGFEDQNEMVSSLQNISALKIDLEKKKQSMEKLSSLNQDLLSALKNKSVTQKMEMWMENFAQRWDNLTQKLEKSSAQISQAVTTTQPSLTQTTVMETVTMVTTREQIMVKHAQEELPPPPPQKKRQITVDSEIRKRLDVDITELHSWITRSEAVLQSSEFAVYRKEGNISDLKEKVNAIAREKAEKFRKLQDASRSAQALVEQMVNEGVNAESIRQASEQLNSRWTEFCQLLSERVNWLEYQNNIITFYNQLQQLEQMTTTAENLLKTQPTTLSEPTAIKSQLKICKDEVNRLSALQPQIERLKIQSLTLKEKGQGPMFLDADFVAFTNHFNYVFDGVRAREKELQTIFDTLPPMRYQETMSSIRTWIQQSENKLSIPHLSVTEYEIMEERLGKLQALQSSLKEQQNGFNYLNATVKEIAKKAPSEISQKYQSEFEEVEGRWKKLSTQLVEHCQKLEEHMNKLRKFQNHKKTLQKWMAEVDVFLKEEWPALGDAEILKKQLKQCRLLVGDIQTIQPSLNSVNEGGQKIKSEAEFEFASRLEKELKELNTQWDHICRQVYTRKEALKAGLDKTVSLQKDLSEMHEWMTQAEEEYLERDFEYKTPDELQTAVEEMKRAKEEALQKEAKVKLLTETVNSVISQAPPAAQEALKKELETLTTNYQWLCTRLNGKCKTLEEVWACWHELLSYLEKANKWLNEVELKLKATENVPAGAEEITEVLESLENLMHHSEENPNQIRLLAQTLTDGGVMDELINEELETFNSRWRELHEEAVRKQKLLEQSIQSAQEIEKSLHLIQESLEFIDKQLAAYIADKVDAAQMPQEAQKIQSDLTSHEISLEEMKKHNQGKDANQRVLSQIDVAQKKLQDVSIKFRLFQKPANFEQRLEESKMILDEVKMHLPALETKSVEQEVVQSQLSHCVNLYKSLSEVKSEVEMVIKTGRQIVQKKQTENPKELDERVTALKLHYNELGAKVTERKQQLEKCLKLSRKMRKEMNVLTEWLAATDTELTKRSAVEGMPSNLDSEVAWGKATQKEIEKQKAHLKSVTELGDSLKTVLGKKETLVEDKLTLLNSNWIAVTSRVEEWLNLLLEYQKHMESFDQNVEHITKWIIHTDELLDESEKRKPQQKEDILKRLKAEMNDIRPKVDATRDQAAKLMANRGDYCRKIVEPQISELNRRFAAISHRIKTGKASIPLKELEQFNSDIQKLLEPLEAEIQQGVNLKEEDFNKDMSEDNEGTVNELLQRGDNLQQRITDERKREEIKLKQQLLQTKHNALKDLRSQRRKKALEISHQWYQYKSQADDLLKCLDEIEKKLASLPEPRDERKIKEIDRELQKKKEELNAVRRQAESLSENGAAMAVEPTQIQLSKRWREIESNFAQFRRLNFAQIHTLHEETMVVTTEDMPLDVSYVPSTYLTEISHILQALSEVEQLLNAPELNAKDFEDLFKQEESLKNIKENLQQISGRIDVIHKKKTAALQSATPMERVKLQEAVSQMDFHWEKLNRMYKERQGRFDRSVEKWRHFHYDMKVFNQWLNDVEQFFKKTQNPENWEHAKYKWYLKELQDGIGQRQAVVRTLNATGEEIIQQSSKTDANILQEKLGSLSLRWHEVCKELAERRKRVEEQKNVFSEFQRDLNEFVSWLEEADNIATTPPGDEEQLKEKLEQVKLLTEELPLRQGILKQLNETGGAVLVSAPIRPEEQDKLEKKLKQTNLQWIKVSRALPEKQGELEVHIKDFRQFEEQLDHLLLWLSPIRNQLEIYNQPSQPGPFDLKETEVTVQAKQPDVERLLSKGQHLYKEKPSTQPVKRKLEDLRSEWEAVNHLLWELRTKQPDRAPGLSTTGASASQTVTVVTQPVDTKETVISKLEMPSSLLLEVPALADFNRAWTELTDWLSLLDRVIKSQRVMVGDLEDINEMIIKQKATLQDLEQRRPQLEELITAAQNLKNKTSNQEARTIITDRIERIQIQWDEVQEQLQNRRQQLNEMLKDSTQWLEAKEEAEQVIGQARGKLDSWKEGPHTMDAIQKKITETKQLAKDLRQRQINVDVANDLALKLLRDYSADDTRKVHMITENINTSWGNILKRVSEREAALEETQRLLQQFPLDLEKFLAWITEAETTANVLQDASRKEKLLEDSRGVRELMKPWQDLQGEIEAHTDIYHNLDENGQKILRSLEGSDEAPLLQRRLDNMNFKWSELRKKSLNIRSHLEVSSDQWKRLHLSLQELLVWLQLKDDELSRQAPIGGDFPAVQKQNDVHRAFKRELKTKEPVIMSTLETVRIFLTEQPLEGLEKLYQEPRELPPEERAQNVTRLLRKQAEEVNTEWDKLNLHSADWQRKIDEALERLQELQEAADELDLKLRQAEVIKGSWQPVGDLLIDSLQDHLEKVKALRGEIAPLKENVNHVNDLAHHLTTLGIQLSPYNLSILEDLNTRWRLLQVAVEDRVRQLHEAHRDFGPASQHFLSTSVQGPWERAISPNKVPYYINHETQTTCWDHPKMTELYQSLADLNNVRFSAYRTAMKLRRLQKALCLDLLSLSAACDALDQHNLKQNDQPMDILQIINCLTTIYDRLEQEHNNLVNVPLCVDMCLNWLLNVYDTGRTGRIRVLSFKTGIISLCKAHLEDKYRYLFKQVASSTGFCDQRRLGLLLHDSIQIPRQLGEVASFGGSNIEPSVRSCFQFANNKPEIEAALFLDWMRLEPQSMVWLPVLHRVAAAETAKHQAKCNICKECPIIGFRYRSLKHFNYDICQSCFFSGRVAKGHKMHYPMVEYCTPTTSGEDVRDFAKVLKNKFRTKRYFAKHPRMGYLPVQTVLEGDNMETPVTLINFWPVDSAPASSPQLSHDDTHSRIEHYASRLAEMENSNGSYLNDSISPNESIDDEHLLIQHYCQSLNQDSPLSQPRSPAQILISLESEERGELERILADLEEENRNLQAEYDRLKQQHEHKGLSPLPSPPEMMPTSPQSPRDAELIAEAKLLRQHKGRLEARMQILEDHNKQLESQLHRLRQLLEQPQAEAKVNGTTVSSPSTSLQRSDSSQPMLLRVVGSQTSESMGEEDLLSPPQDTSTGLEEVMEQLNNSFPSSRGRNAPGKPMREDTM</sequence>
<dbReference type="EMBL" id="AABR07073532">
    <property type="status" value="NOT_ANNOTATED_CDS"/>
    <property type="molecule type" value="Genomic_DNA"/>
</dbReference>
<dbReference type="EMBL" id="AC097383">
    <property type="status" value="NOT_ANNOTATED_CDS"/>
    <property type="molecule type" value="Genomic_DNA"/>
</dbReference>
<dbReference type="EMBL" id="AC111223">
    <property type="status" value="NOT_ANNOTATED_CDS"/>
    <property type="molecule type" value="Genomic_DNA"/>
</dbReference>
<dbReference type="EMBL" id="AC112800">
    <property type="status" value="NOT_ANNOTATED_CDS"/>
    <property type="molecule type" value="Genomic_DNA"/>
</dbReference>
<dbReference type="EMBL" id="AC113761">
    <property type="status" value="NOT_ANNOTATED_CDS"/>
    <property type="molecule type" value="Genomic_DNA"/>
</dbReference>
<dbReference type="EMBL" id="AC117871">
    <property type="status" value="NOT_ANNOTATED_CDS"/>
    <property type="molecule type" value="Genomic_DNA"/>
</dbReference>
<dbReference type="EMBL" id="AC125680">
    <property type="status" value="NOT_ANNOTATED_CDS"/>
    <property type="molecule type" value="Genomic_DNA"/>
</dbReference>
<dbReference type="EMBL" id="AC125768">
    <property type="status" value="NOT_ANNOTATED_CDS"/>
    <property type="molecule type" value="Genomic_DNA"/>
</dbReference>
<dbReference type="EMBL" id="AC131219">
    <property type="status" value="NOT_ANNOTATED_CDS"/>
    <property type="molecule type" value="Genomic_DNA"/>
</dbReference>
<dbReference type="EMBL" id="AC136037">
    <property type="status" value="NOT_ANNOTATED_CDS"/>
    <property type="molecule type" value="Genomic_DNA"/>
</dbReference>
<dbReference type="EMBL" id="X07000">
    <property type="protein sequence ID" value="CAA30057.1"/>
    <property type="molecule type" value="Genomic_DNA"/>
</dbReference>
<dbReference type="PIR" id="S01614">
    <property type="entry name" value="S01614"/>
</dbReference>
<dbReference type="RefSeq" id="NP_001357805.1">
    <property type="nucleotide sequence ID" value="NM_001370876.1"/>
</dbReference>
<dbReference type="RefSeq" id="XP_017457399.1">
    <property type="nucleotide sequence ID" value="XM_017601910.1"/>
</dbReference>
<dbReference type="SMR" id="P11530"/>
<dbReference type="CORUM" id="P11530"/>
<dbReference type="FunCoup" id="P11530">
    <property type="interactions" value="824"/>
</dbReference>
<dbReference type="IntAct" id="P11530">
    <property type="interactions" value="11"/>
</dbReference>
<dbReference type="STRING" id="10116.ENSRNOP00000029969"/>
<dbReference type="GlyGen" id="P11530">
    <property type="glycosylation" value="1 site, 1 O-linked glycan (1 site)"/>
</dbReference>
<dbReference type="iPTMnet" id="P11530"/>
<dbReference type="PhosphoSitePlus" id="P11530"/>
<dbReference type="jPOST" id="P11530"/>
<dbReference type="PaxDb" id="10116-ENSRNOP00000029969"/>
<dbReference type="Ensembl" id="ENSRNOT00000035692.7">
    <property type="protein sequence ID" value="ENSRNOP00000029969.6"/>
    <property type="gene ID" value="ENSRNOG00000046366.3"/>
</dbReference>
<dbReference type="GeneID" id="24907"/>
<dbReference type="AGR" id="RGD:2507"/>
<dbReference type="RGD" id="2507">
    <property type="gene designation" value="Dmd"/>
</dbReference>
<dbReference type="eggNOG" id="KOG4286">
    <property type="taxonomic scope" value="Eukaryota"/>
</dbReference>
<dbReference type="GeneTree" id="ENSGT00940000154342"/>
<dbReference type="InParanoid" id="P11530"/>
<dbReference type="OMA" id="SACERYT"/>
<dbReference type="Reactome" id="R-RNO-390522">
    <property type="pathway name" value="Striated Muscle Contraction"/>
</dbReference>
<dbReference type="Reactome" id="R-RNO-9913351">
    <property type="pathway name" value="Formation of the dystrophin-glycoprotein complex (DGC)"/>
</dbReference>
<dbReference type="PRO" id="PR:P11530"/>
<dbReference type="Proteomes" id="UP000002494">
    <property type="component" value="Chromosome X"/>
</dbReference>
<dbReference type="Bgee" id="ENSRNOG00000046366">
    <property type="expression patterns" value="Expressed in quadriceps femoris and 18 other cell types or tissues"/>
</dbReference>
<dbReference type="ExpressionAtlas" id="P11530">
    <property type="expression patterns" value="baseline and differential"/>
</dbReference>
<dbReference type="GO" id="GO:0097449">
    <property type="term" value="C:astrocyte projection"/>
    <property type="evidence" value="ECO:0000314"/>
    <property type="project" value="RGD"/>
</dbReference>
<dbReference type="GO" id="GO:0030424">
    <property type="term" value="C:axon"/>
    <property type="evidence" value="ECO:0000314"/>
    <property type="project" value="RGD"/>
</dbReference>
<dbReference type="GO" id="GO:0030054">
    <property type="term" value="C:cell junction"/>
    <property type="evidence" value="ECO:0000266"/>
    <property type="project" value="RGD"/>
</dbReference>
<dbReference type="GO" id="GO:0042995">
    <property type="term" value="C:cell projection"/>
    <property type="evidence" value="ECO:0000314"/>
    <property type="project" value="RGD"/>
</dbReference>
<dbReference type="GO" id="GO:0009986">
    <property type="term" value="C:cell surface"/>
    <property type="evidence" value="ECO:0000266"/>
    <property type="project" value="RGD"/>
</dbReference>
<dbReference type="GO" id="GO:0030055">
    <property type="term" value="C:cell-substrate junction"/>
    <property type="evidence" value="ECO:0000266"/>
    <property type="project" value="RGD"/>
</dbReference>
<dbReference type="GO" id="GO:0043034">
    <property type="term" value="C:costamere"/>
    <property type="evidence" value="ECO:0000266"/>
    <property type="project" value="RGD"/>
</dbReference>
<dbReference type="GO" id="GO:0016010">
    <property type="term" value="C:dystrophin-associated glycoprotein complex"/>
    <property type="evidence" value="ECO:0000314"/>
    <property type="project" value="RGD"/>
</dbReference>
<dbReference type="GO" id="GO:0030175">
    <property type="term" value="C:filopodium"/>
    <property type="evidence" value="ECO:0000266"/>
    <property type="project" value="RGD"/>
</dbReference>
<dbReference type="GO" id="GO:0031527">
    <property type="term" value="C:filopodium membrane"/>
    <property type="evidence" value="ECO:0000266"/>
    <property type="project" value="RGD"/>
</dbReference>
<dbReference type="GO" id="GO:0098982">
    <property type="term" value="C:GABA-ergic synapse"/>
    <property type="evidence" value="ECO:0000266"/>
    <property type="project" value="RGD"/>
</dbReference>
<dbReference type="GO" id="GO:0030027">
    <property type="term" value="C:lamellipodium"/>
    <property type="evidence" value="ECO:0000314"/>
    <property type="project" value="RGD"/>
</dbReference>
<dbReference type="GO" id="GO:0099617">
    <property type="term" value="C:matrix side of mitochondrial inner membrane"/>
    <property type="evidence" value="ECO:0000314"/>
    <property type="project" value="RGD"/>
</dbReference>
<dbReference type="GO" id="GO:0045121">
    <property type="term" value="C:membrane raft"/>
    <property type="evidence" value="ECO:0000266"/>
    <property type="project" value="RGD"/>
</dbReference>
<dbReference type="GO" id="GO:0005741">
    <property type="term" value="C:mitochondrial outer membrane"/>
    <property type="evidence" value="ECO:0000314"/>
    <property type="project" value="RGD"/>
</dbReference>
<dbReference type="GO" id="GO:0030016">
    <property type="term" value="C:myofibril"/>
    <property type="evidence" value="ECO:0000314"/>
    <property type="project" value="RGD"/>
</dbReference>
<dbReference type="GO" id="GO:0005883">
    <property type="term" value="C:neurofilament"/>
    <property type="evidence" value="ECO:0000314"/>
    <property type="project" value="RGD"/>
</dbReference>
<dbReference type="GO" id="GO:0044306">
    <property type="term" value="C:neuron projection terminus"/>
    <property type="evidence" value="ECO:0000266"/>
    <property type="project" value="RGD"/>
</dbReference>
<dbReference type="GO" id="GO:0043025">
    <property type="term" value="C:neuronal cell body"/>
    <property type="evidence" value="ECO:0000314"/>
    <property type="project" value="RGD"/>
</dbReference>
<dbReference type="GO" id="GO:0005634">
    <property type="term" value="C:nucleus"/>
    <property type="evidence" value="ECO:0000314"/>
    <property type="project" value="BHF-UCL"/>
</dbReference>
<dbReference type="GO" id="GO:0048471">
    <property type="term" value="C:perinuclear region of cytoplasm"/>
    <property type="evidence" value="ECO:0000314"/>
    <property type="project" value="RGD"/>
</dbReference>
<dbReference type="GO" id="GO:0005886">
    <property type="term" value="C:plasma membrane"/>
    <property type="evidence" value="ECO:0000266"/>
    <property type="project" value="RGD"/>
</dbReference>
<dbReference type="GO" id="GO:0098794">
    <property type="term" value="C:postsynapse"/>
    <property type="evidence" value="ECO:0000266"/>
    <property type="project" value="RGD"/>
</dbReference>
<dbReference type="GO" id="GO:0014069">
    <property type="term" value="C:postsynaptic density"/>
    <property type="evidence" value="ECO:0000314"/>
    <property type="project" value="UniProtKB"/>
</dbReference>
<dbReference type="GO" id="GO:0045211">
    <property type="term" value="C:postsynaptic membrane"/>
    <property type="evidence" value="ECO:0007669"/>
    <property type="project" value="UniProtKB-SubCell"/>
</dbReference>
<dbReference type="GO" id="GO:0099572">
    <property type="term" value="C:postsynaptic specialization"/>
    <property type="evidence" value="ECO:0000266"/>
    <property type="project" value="RGD"/>
</dbReference>
<dbReference type="GO" id="GO:0032991">
    <property type="term" value="C:protein-containing complex"/>
    <property type="evidence" value="ECO:0000266"/>
    <property type="project" value="RGD"/>
</dbReference>
<dbReference type="GO" id="GO:0005840">
    <property type="term" value="C:ribosome"/>
    <property type="evidence" value="ECO:0000314"/>
    <property type="project" value="RGD"/>
</dbReference>
<dbReference type="GO" id="GO:0042383">
    <property type="term" value="C:sarcolemma"/>
    <property type="evidence" value="ECO:0000314"/>
    <property type="project" value="RGD"/>
</dbReference>
<dbReference type="GO" id="GO:0030141">
    <property type="term" value="C:secretory granule"/>
    <property type="evidence" value="ECO:0000314"/>
    <property type="project" value="RGD"/>
</dbReference>
<dbReference type="GO" id="GO:0045202">
    <property type="term" value="C:synapse"/>
    <property type="evidence" value="ECO:0000266"/>
    <property type="project" value="RGD"/>
</dbReference>
<dbReference type="GO" id="GO:0030672">
    <property type="term" value="C:synaptic vesicle membrane"/>
    <property type="evidence" value="ECO:0000314"/>
    <property type="project" value="RGD"/>
</dbReference>
<dbReference type="GO" id="GO:0030018">
    <property type="term" value="C:Z disc"/>
    <property type="evidence" value="ECO:0000266"/>
    <property type="project" value="RGD"/>
</dbReference>
<dbReference type="GO" id="GO:0003779">
    <property type="term" value="F:actin binding"/>
    <property type="evidence" value="ECO:0000314"/>
    <property type="project" value="RGD"/>
</dbReference>
<dbReference type="GO" id="GO:0002162">
    <property type="term" value="F:dystroglycan binding"/>
    <property type="evidence" value="ECO:0000266"/>
    <property type="project" value="RGD"/>
</dbReference>
<dbReference type="GO" id="GO:0005178">
    <property type="term" value="F:integrin binding"/>
    <property type="evidence" value="ECO:0000353"/>
    <property type="project" value="RGD"/>
</dbReference>
<dbReference type="GO" id="GO:0005521">
    <property type="term" value="F:lamin binding"/>
    <property type="evidence" value="ECO:0000353"/>
    <property type="project" value="RGD"/>
</dbReference>
<dbReference type="GO" id="GO:0017022">
    <property type="term" value="F:myosin binding"/>
    <property type="evidence" value="ECO:0000266"/>
    <property type="project" value="RGD"/>
</dbReference>
<dbReference type="GO" id="GO:0050998">
    <property type="term" value="F:nitric-oxide synthase binding"/>
    <property type="evidence" value="ECO:0000266"/>
    <property type="project" value="RGD"/>
</dbReference>
<dbReference type="GO" id="GO:0030165">
    <property type="term" value="F:PDZ domain binding"/>
    <property type="evidence" value="ECO:0000353"/>
    <property type="project" value="RGD"/>
</dbReference>
<dbReference type="GO" id="GO:0044877">
    <property type="term" value="F:protein-containing complex binding"/>
    <property type="evidence" value="ECO:0000353"/>
    <property type="project" value="RGD"/>
</dbReference>
<dbReference type="GO" id="GO:0008307">
    <property type="term" value="F:structural constituent of muscle"/>
    <property type="evidence" value="ECO:0000266"/>
    <property type="project" value="RGD"/>
</dbReference>
<dbReference type="GO" id="GO:0017166">
    <property type="term" value="F:vinculin binding"/>
    <property type="evidence" value="ECO:0000266"/>
    <property type="project" value="RGD"/>
</dbReference>
<dbReference type="GO" id="GO:0008270">
    <property type="term" value="F:zinc ion binding"/>
    <property type="evidence" value="ECO:0007669"/>
    <property type="project" value="UniProtKB-KW"/>
</dbReference>
<dbReference type="GO" id="GO:0006915">
    <property type="term" value="P:apoptotic process"/>
    <property type="evidence" value="ECO:0000266"/>
    <property type="project" value="RGD"/>
</dbReference>
<dbReference type="GO" id="GO:0060348">
    <property type="term" value="P:bone development"/>
    <property type="evidence" value="ECO:0000266"/>
    <property type="project" value="RGD"/>
</dbReference>
<dbReference type="GO" id="GO:0086001">
    <property type="term" value="P:cardiac muscle cell action potential"/>
    <property type="evidence" value="ECO:0000266"/>
    <property type="project" value="RGD"/>
</dbReference>
<dbReference type="GO" id="GO:0060048">
    <property type="term" value="P:cardiac muscle contraction"/>
    <property type="evidence" value="ECO:0000266"/>
    <property type="project" value="RGD"/>
</dbReference>
<dbReference type="GO" id="GO:0030154">
    <property type="term" value="P:cell differentiation"/>
    <property type="evidence" value="ECO:0000270"/>
    <property type="project" value="RGD"/>
</dbReference>
<dbReference type="GO" id="GO:0021987">
    <property type="term" value="P:cerebral cortex development"/>
    <property type="evidence" value="ECO:0000270"/>
    <property type="project" value="RGD"/>
</dbReference>
<dbReference type="GO" id="GO:0061448">
    <property type="term" value="P:connective tissue development"/>
    <property type="evidence" value="ECO:0000266"/>
    <property type="project" value="RGD"/>
</dbReference>
<dbReference type="GO" id="GO:0008340">
    <property type="term" value="P:determination of adult lifespan"/>
    <property type="evidence" value="ECO:0000266"/>
    <property type="project" value="RGD"/>
</dbReference>
<dbReference type="GO" id="GO:0008065">
    <property type="term" value="P:establishment of blood-nerve barrier"/>
    <property type="evidence" value="ECO:0000266"/>
    <property type="project" value="RGD"/>
</dbReference>
<dbReference type="GO" id="GO:0060857">
    <property type="term" value="P:establishment of glial blood-brain barrier"/>
    <property type="evidence" value="ECO:0000266"/>
    <property type="project" value="RGD"/>
</dbReference>
<dbReference type="GO" id="GO:0010467">
    <property type="term" value="P:gene expression"/>
    <property type="evidence" value="ECO:0000266"/>
    <property type="project" value="RGD"/>
</dbReference>
<dbReference type="GO" id="GO:0006954">
    <property type="term" value="P:inflammatory response"/>
    <property type="evidence" value="ECO:0000266"/>
    <property type="project" value="RGD"/>
</dbReference>
<dbReference type="GO" id="GO:0060173">
    <property type="term" value="P:limb development"/>
    <property type="evidence" value="ECO:0000266"/>
    <property type="project" value="RGD"/>
</dbReference>
<dbReference type="GO" id="GO:0035264">
    <property type="term" value="P:multicellular organism growth"/>
    <property type="evidence" value="ECO:0000266"/>
    <property type="project" value="RGD"/>
</dbReference>
<dbReference type="GO" id="GO:0046716">
    <property type="term" value="P:muscle cell cellular homeostasis"/>
    <property type="evidence" value="ECO:0000266"/>
    <property type="project" value="RGD"/>
</dbReference>
<dbReference type="GO" id="GO:0055001">
    <property type="term" value="P:muscle cell development"/>
    <property type="evidence" value="ECO:0000266"/>
    <property type="project" value="RGD"/>
</dbReference>
<dbReference type="GO" id="GO:0042692">
    <property type="term" value="P:muscle cell differentiation"/>
    <property type="evidence" value="ECO:0000270"/>
    <property type="project" value="RGD"/>
</dbReference>
<dbReference type="GO" id="GO:0007517">
    <property type="term" value="P:muscle organ development"/>
    <property type="evidence" value="ECO:0000266"/>
    <property type="project" value="RGD"/>
</dbReference>
<dbReference type="GO" id="GO:0014904">
    <property type="term" value="P:myotube cell development"/>
    <property type="evidence" value="ECO:0000266"/>
    <property type="project" value="RGD"/>
</dbReference>
<dbReference type="GO" id="GO:0070373">
    <property type="term" value="P:negative regulation of ERK1 and ERK2 cascade"/>
    <property type="evidence" value="ECO:0000266"/>
    <property type="project" value="RGD"/>
</dbReference>
<dbReference type="GO" id="GO:0045665">
    <property type="term" value="P:negative regulation of neuron differentiation"/>
    <property type="evidence" value="ECO:0000315"/>
    <property type="project" value="RGD"/>
</dbReference>
<dbReference type="GO" id="GO:0048666">
    <property type="term" value="P:neuron development"/>
    <property type="evidence" value="ECO:0000318"/>
    <property type="project" value="GO_Central"/>
</dbReference>
<dbReference type="GO" id="GO:0030182">
    <property type="term" value="P:neuron differentiation"/>
    <property type="evidence" value="ECO:0000270"/>
    <property type="project" value="RGD"/>
</dbReference>
<dbReference type="GO" id="GO:0048812">
    <property type="term" value="P:neuron projection morphogenesis"/>
    <property type="evidence" value="ECO:0000315"/>
    <property type="project" value="RGD"/>
</dbReference>
<dbReference type="GO" id="GO:0051647">
    <property type="term" value="P:nucleus localization"/>
    <property type="evidence" value="ECO:0000266"/>
    <property type="project" value="RGD"/>
</dbReference>
<dbReference type="GO" id="GO:0021629">
    <property type="term" value="P:olfactory nerve structural organization"/>
    <property type="evidence" value="ECO:0000266"/>
    <property type="project" value="RGD"/>
</dbReference>
<dbReference type="GO" id="GO:0043043">
    <property type="term" value="P:peptide biosynthetic process"/>
    <property type="evidence" value="ECO:0000266"/>
    <property type="project" value="RGD"/>
</dbReference>
<dbReference type="GO" id="GO:0008284">
    <property type="term" value="P:positive regulation of cell population proliferation"/>
    <property type="evidence" value="ECO:0000315"/>
    <property type="project" value="RGD"/>
</dbReference>
<dbReference type="GO" id="GO:0001954">
    <property type="term" value="P:positive regulation of cell-matrix adhesion"/>
    <property type="evidence" value="ECO:0000266"/>
    <property type="project" value="RGD"/>
</dbReference>
<dbReference type="GO" id="GO:0045666">
    <property type="term" value="P:positive regulation of neuron differentiation"/>
    <property type="evidence" value="ECO:0000315"/>
    <property type="project" value="BHF-UCL"/>
</dbReference>
<dbReference type="GO" id="GO:0010976">
    <property type="term" value="P:positive regulation of neuron projection development"/>
    <property type="evidence" value="ECO:0000315"/>
    <property type="project" value="BHF-UCL"/>
</dbReference>
<dbReference type="GO" id="GO:0008104">
    <property type="term" value="P:protein localization"/>
    <property type="evidence" value="ECO:0000266"/>
    <property type="project" value="RGD"/>
</dbReference>
<dbReference type="GO" id="GO:0065003">
    <property type="term" value="P:protein-containing complex assembly"/>
    <property type="evidence" value="ECO:0000266"/>
    <property type="project" value="RGD"/>
</dbReference>
<dbReference type="GO" id="GO:1903409">
    <property type="term" value="P:reactive oxygen species biosynthetic process"/>
    <property type="evidence" value="ECO:0000266"/>
    <property type="project" value="RGD"/>
</dbReference>
<dbReference type="GO" id="GO:0010881">
    <property type="term" value="P:regulation of cardiac muscle contraction by regulation of the release of sequestered calcium ion"/>
    <property type="evidence" value="ECO:0000266"/>
    <property type="project" value="RGD"/>
</dbReference>
<dbReference type="GO" id="GO:0090287">
    <property type="term" value="P:regulation of cellular response to growth factor stimulus"/>
    <property type="evidence" value="ECO:0000315"/>
    <property type="project" value="BHF-UCL"/>
</dbReference>
<dbReference type="GO" id="GO:0006355">
    <property type="term" value="P:regulation of DNA-templated transcription"/>
    <property type="evidence" value="ECO:0000266"/>
    <property type="project" value="RGD"/>
</dbReference>
<dbReference type="GO" id="GO:0010468">
    <property type="term" value="P:regulation of gene expression"/>
    <property type="evidence" value="ECO:0000266"/>
    <property type="project" value="RGD"/>
</dbReference>
<dbReference type="GO" id="GO:0002027">
    <property type="term" value="P:regulation of heart rate"/>
    <property type="evidence" value="ECO:0000266"/>
    <property type="project" value="RGD"/>
</dbReference>
<dbReference type="GO" id="GO:0042391">
    <property type="term" value="P:regulation of membrane potential"/>
    <property type="evidence" value="ECO:0000266"/>
    <property type="project" value="RGD"/>
</dbReference>
<dbReference type="GO" id="GO:0090257">
    <property type="term" value="P:regulation of muscle system process"/>
    <property type="evidence" value="ECO:0000318"/>
    <property type="project" value="GO_Central"/>
</dbReference>
<dbReference type="GO" id="GO:0010880">
    <property type="term" value="P:regulation of release of sequestered calcium ion into cytosol by sarcoplasmic reticulum"/>
    <property type="evidence" value="ECO:0000266"/>
    <property type="project" value="RGD"/>
</dbReference>
<dbReference type="GO" id="GO:0014819">
    <property type="term" value="P:regulation of skeletal muscle contraction"/>
    <property type="evidence" value="ECO:0000266"/>
    <property type="project" value="RGD"/>
</dbReference>
<dbReference type="GO" id="GO:0014809">
    <property type="term" value="P:regulation of skeletal muscle contraction by regulation of release of sequestered calcium ion"/>
    <property type="evidence" value="ECO:0000266"/>
    <property type="project" value="RGD"/>
</dbReference>
<dbReference type="GO" id="GO:0014894">
    <property type="term" value="P:response to denervation involved in regulation of muscle adaptation"/>
    <property type="evidence" value="ECO:0000270"/>
    <property type="project" value="RGD"/>
</dbReference>
<dbReference type="GO" id="GO:0035994">
    <property type="term" value="P:response to muscle stretch"/>
    <property type="evidence" value="ECO:0000266"/>
    <property type="project" value="RGD"/>
</dbReference>
<dbReference type="GO" id="GO:0009410">
    <property type="term" value="P:response to xenobiotic stimulus"/>
    <property type="evidence" value="ECO:0000266"/>
    <property type="project" value="RGD"/>
</dbReference>
<dbReference type="GO" id="GO:0007519">
    <property type="term" value="P:skeletal muscle tissue development"/>
    <property type="evidence" value="ECO:0000266"/>
    <property type="project" value="RGD"/>
</dbReference>
<dbReference type="GO" id="GO:0043403">
    <property type="term" value="P:skeletal muscle tissue regeneration"/>
    <property type="evidence" value="ECO:0000270"/>
    <property type="project" value="RGD"/>
</dbReference>
<dbReference type="GO" id="GO:0055002">
    <property type="term" value="P:striated muscle cell development"/>
    <property type="evidence" value="ECO:0000266"/>
    <property type="project" value="RGD"/>
</dbReference>
<dbReference type="GO" id="GO:0006941">
    <property type="term" value="P:striated muscle contraction"/>
    <property type="evidence" value="ECO:0000266"/>
    <property type="project" value="RGD"/>
</dbReference>
<dbReference type="GO" id="GO:0099536">
    <property type="term" value="P:synaptic signaling"/>
    <property type="evidence" value="ECO:0000318"/>
    <property type="project" value="GO_Central"/>
</dbReference>
<dbReference type="GO" id="GO:0007271">
    <property type="term" value="P:synaptic transmission, cholinergic"/>
    <property type="evidence" value="ECO:0000266"/>
    <property type="project" value="RGD"/>
</dbReference>
<dbReference type="GO" id="GO:0090659">
    <property type="term" value="P:walking behavior"/>
    <property type="evidence" value="ECO:0000266"/>
    <property type="project" value="RGD"/>
</dbReference>
<dbReference type="CDD" id="cd21231">
    <property type="entry name" value="CH_DMD_rpt1"/>
    <property type="match status" value="1"/>
</dbReference>
<dbReference type="CDD" id="cd21233">
    <property type="entry name" value="CH_DMD_rpt2"/>
    <property type="match status" value="1"/>
</dbReference>
<dbReference type="CDD" id="cd16246">
    <property type="entry name" value="EFh_DMD"/>
    <property type="match status" value="1"/>
</dbReference>
<dbReference type="CDD" id="cd00176">
    <property type="entry name" value="SPEC"/>
    <property type="match status" value="11"/>
</dbReference>
<dbReference type="CDD" id="cd00201">
    <property type="entry name" value="WW"/>
    <property type="match status" value="1"/>
</dbReference>
<dbReference type="CDD" id="cd02334">
    <property type="entry name" value="ZZ_dystrophin"/>
    <property type="match status" value="1"/>
</dbReference>
<dbReference type="FunFam" id="1.20.58.60:FF:000118">
    <property type="entry name" value="Dystrophin"/>
    <property type="match status" value="1"/>
</dbReference>
<dbReference type="FunFam" id="1.20.58.60:FF:000170">
    <property type="entry name" value="Dystrophin"/>
    <property type="match status" value="1"/>
</dbReference>
<dbReference type="FunFam" id="1.20.58.60:FF:000207">
    <property type="entry name" value="Dystrophin"/>
    <property type="match status" value="1"/>
</dbReference>
<dbReference type="FunFam" id="1.20.58.60:FF:000283">
    <property type="entry name" value="Dystrophin"/>
    <property type="match status" value="1"/>
</dbReference>
<dbReference type="FunFam" id="1.10.238.10:FF:000008">
    <property type="entry name" value="Dystrophin isoform 2"/>
    <property type="match status" value="1"/>
</dbReference>
<dbReference type="FunFam" id="3.30.60.90:FF:000001">
    <property type="entry name" value="Dystrophin isoform 2"/>
    <property type="match status" value="1"/>
</dbReference>
<dbReference type="FunFam" id="1.10.238.10:FF:000023">
    <property type="entry name" value="dystrophin isoform X1"/>
    <property type="match status" value="1"/>
</dbReference>
<dbReference type="FunFam" id="1.20.58.60:FF:000140">
    <property type="entry name" value="dystrophin isoform X1"/>
    <property type="match status" value="1"/>
</dbReference>
<dbReference type="FunFam" id="2.20.70.10:FF:000004">
    <property type="entry name" value="dystrophin isoform X1"/>
    <property type="match status" value="1"/>
</dbReference>
<dbReference type="FunFam" id="1.20.58.60:FF:000091">
    <property type="entry name" value="dystrophin isoform X2"/>
    <property type="match status" value="1"/>
</dbReference>
<dbReference type="FunFam" id="1.20.58.60:FF:000146">
    <property type="entry name" value="dystrophin isoform X2"/>
    <property type="match status" value="1"/>
</dbReference>
<dbReference type="FunFam" id="1.20.58.60:FF:000183">
    <property type="entry name" value="dystrophin isoform X2"/>
    <property type="match status" value="1"/>
</dbReference>
<dbReference type="FunFam" id="1.10.418.10:FF:000032">
    <property type="entry name" value="utrophin isoform X1"/>
    <property type="match status" value="1"/>
</dbReference>
<dbReference type="FunFam" id="1.20.58.60:FF:000029">
    <property type="entry name" value="utrophin isoform X1"/>
    <property type="match status" value="1"/>
</dbReference>
<dbReference type="FunFam" id="1.20.58.60:FF:000056">
    <property type="entry name" value="utrophin isoform X1"/>
    <property type="match status" value="1"/>
</dbReference>
<dbReference type="FunFam" id="1.20.58.60:FF:000070">
    <property type="entry name" value="utrophin isoform X1"/>
    <property type="match status" value="1"/>
</dbReference>
<dbReference type="FunFam" id="1.20.58.60:FF:000075">
    <property type="entry name" value="utrophin isoform X1"/>
    <property type="match status" value="1"/>
</dbReference>
<dbReference type="FunFam" id="1.10.418.10:FF:000044">
    <property type="entry name" value="utrophin isoform X2"/>
    <property type="match status" value="1"/>
</dbReference>
<dbReference type="FunFam" id="1.20.58.60:FF:000102">
    <property type="entry name" value="utrophin isoform X2"/>
    <property type="match status" value="1"/>
</dbReference>
<dbReference type="Gene3D" id="1.20.58.60">
    <property type="match status" value="16"/>
</dbReference>
<dbReference type="Gene3D" id="2.20.70.10">
    <property type="match status" value="1"/>
</dbReference>
<dbReference type="Gene3D" id="3.30.60.90">
    <property type="match status" value="1"/>
</dbReference>
<dbReference type="Gene3D" id="1.10.418.10">
    <property type="entry name" value="Calponin-like domain"/>
    <property type="match status" value="2"/>
</dbReference>
<dbReference type="Gene3D" id="1.10.238.10">
    <property type="entry name" value="EF-hand"/>
    <property type="match status" value="2"/>
</dbReference>
<dbReference type="InterPro" id="IPR001589">
    <property type="entry name" value="Actinin_actin-bd_CS"/>
</dbReference>
<dbReference type="InterPro" id="IPR001715">
    <property type="entry name" value="CH_dom"/>
</dbReference>
<dbReference type="InterPro" id="IPR036872">
    <property type="entry name" value="CH_dom_sf"/>
</dbReference>
<dbReference type="InterPro" id="IPR035436">
    <property type="entry name" value="Dystrophin/utrophin"/>
</dbReference>
<dbReference type="InterPro" id="IPR011992">
    <property type="entry name" value="EF-hand-dom_pair"/>
</dbReference>
<dbReference type="InterPro" id="IPR015153">
    <property type="entry name" value="EF-hand_dom_typ1"/>
</dbReference>
<dbReference type="InterPro" id="IPR015154">
    <property type="entry name" value="EF-hand_dom_typ2"/>
</dbReference>
<dbReference type="InterPro" id="IPR050774">
    <property type="entry name" value="KCMF1/Dystrophin"/>
</dbReference>
<dbReference type="InterPro" id="IPR018159">
    <property type="entry name" value="Spectrin/alpha-actinin"/>
</dbReference>
<dbReference type="InterPro" id="IPR002017">
    <property type="entry name" value="Spectrin_repeat"/>
</dbReference>
<dbReference type="InterPro" id="IPR001202">
    <property type="entry name" value="WW_dom"/>
</dbReference>
<dbReference type="InterPro" id="IPR036020">
    <property type="entry name" value="WW_dom_sf"/>
</dbReference>
<dbReference type="InterPro" id="IPR000433">
    <property type="entry name" value="Znf_ZZ"/>
</dbReference>
<dbReference type="InterPro" id="IPR043145">
    <property type="entry name" value="Znf_ZZ_sf"/>
</dbReference>
<dbReference type="PANTHER" id="PTHR12268:SF14">
    <property type="entry name" value="DYSTROPHIN-1"/>
    <property type="match status" value="1"/>
</dbReference>
<dbReference type="PANTHER" id="PTHR12268">
    <property type="entry name" value="E3 UBIQUITIN-PROTEIN LIGASE KCMF1"/>
    <property type="match status" value="1"/>
</dbReference>
<dbReference type="Pfam" id="PF00307">
    <property type="entry name" value="CH"/>
    <property type="match status" value="2"/>
</dbReference>
<dbReference type="Pfam" id="PF09068">
    <property type="entry name" value="EF-hand_2"/>
    <property type="match status" value="1"/>
</dbReference>
<dbReference type="Pfam" id="PF09069">
    <property type="entry name" value="EF-hand_3"/>
    <property type="match status" value="1"/>
</dbReference>
<dbReference type="Pfam" id="PF00435">
    <property type="entry name" value="Spectrin"/>
    <property type="match status" value="17"/>
</dbReference>
<dbReference type="Pfam" id="PF00397">
    <property type="entry name" value="WW"/>
    <property type="match status" value="1"/>
</dbReference>
<dbReference type="Pfam" id="PF00569">
    <property type="entry name" value="ZZ"/>
    <property type="match status" value="1"/>
</dbReference>
<dbReference type="PIRSF" id="PIRSF002341">
    <property type="entry name" value="Dystrophin/utrophin"/>
    <property type="match status" value="1"/>
</dbReference>
<dbReference type="SMART" id="SM00033">
    <property type="entry name" value="CH"/>
    <property type="match status" value="2"/>
</dbReference>
<dbReference type="SMART" id="SM00150">
    <property type="entry name" value="SPEC"/>
    <property type="match status" value="23"/>
</dbReference>
<dbReference type="SMART" id="SM00456">
    <property type="entry name" value="WW"/>
    <property type="match status" value="1"/>
</dbReference>
<dbReference type="SMART" id="SM00291">
    <property type="entry name" value="ZnF_ZZ"/>
    <property type="match status" value="1"/>
</dbReference>
<dbReference type="SUPFAM" id="SSF47576">
    <property type="entry name" value="Calponin-homology domain, CH-domain"/>
    <property type="match status" value="1"/>
</dbReference>
<dbReference type="SUPFAM" id="SSF47473">
    <property type="entry name" value="EF-hand"/>
    <property type="match status" value="2"/>
</dbReference>
<dbReference type="SUPFAM" id="SSF57850">
    <property type="entry name" value="RING/U-box"/>
    <property type="match status" value="1"/>
</dbReference>
<dbReference type="SUPFAM" id="SSF46966">
    <property type="entry name" value="Spectrin repeat"/>
    <property type="match status" value="15"/>
</dbReference>
<dbReference type="SUPFAM" id="SSF51045">
    <property type="entry name" value="WW domain"/>
    <property type="match status" value="1"/>
</dbReference>
<dbReference type="PROSITE" id="PS00019">
    <property type="entry name" value="ACTININ_1"/>
    <property type="match status" value="1"/>
</dbReference>
<dbReference type="PROSITE" id="PS00020">
    <property type="entry name" value="ACTININ_2"/>
    <property type="match status" value="1"/>
</dbReference>
<dbReference type="PROSITE" id="PS50021">
    <property type="entry name" value="CH"/>
    <property type="match status" value="2"/>
</dbReference>
<dbReference type="PROSITE" id="PS01159">
    <property type="entry name" value="WW_DOMAIN_1"/>
    <property type="match status" value="1"/>
</dbReference>
<dbReference type="PROSITE" id="PS50020">
    <property type="entry name" value="WW_DOMAIN_2"/>
    <property type="match status" value="1"/>
</dbReference>
<dbReference type="PROSITE" id="PS01357">
    <property type="entry name" value="ZF_ZZ_1"/>
    <property type="match status" value="1"/>
</dbReference>
<dbReference type="PROSITE" id="PS50135">
    <property type="entry name" value="ZF_ZZ_2"/>
    <property type="match status" value="1"/>
</dbReference>
<name>DMD_RAT</name>
<protein>
    <recommendedName>
        <fullName>Dystrophin</fullName>
    </recommendedName>
</protein>
<keyword id="KW-0009">Actin-binding</keyword>
<keyword id="KW-0106">Calcium</keyword>
<keyword id="KW-1003">Cell membrane</keyword>
<keyword id="KW-0963">Cytoplasm</keyword>
<keyword id="KW-0206">Cytoskeleton</keyword>
<keyword id="KW-0472">Membrane</keyword>
<keyword id="KW-0479">Metal-binding</keyword>
<keyword id="KW-0597">Phosphoprotein</keyword>
<keyword id="KW-0628">Postsynaptic cell membrane</keyword>
<keyword id="KW-1185">Reference proteome</keyword>
<keyword id="KW-0677">Repeat</keyword>
<keyword id="KW-0770">Synapse</keyword>
<keyword id="KW-0862">Zinc</keyword>
<keyword id="KW-0863">Zinc-finger</keyword>
<proteinExistence type="evidence at protein level"/>